<comment type="function">
    <text evidence="1">Metamorphosin A may be part of an internal signaling system involved in control of metamorphosis.</text>
</comment>
<comment type="subcellular location">
    <subcellularLocation>
        <location>Secreted</location>
    </subcellularLocation>
</comment>
<comment type="similarity">
    <text evidence="4">Belongs to the LWamide neuropeptide family.</text>
</comment>
<name>LWA_ACTEQ</name>
<evidence type="ECO:0000250" key="1"/>
<evidence type="ECO:0000255" key="2"/>
<evidence type="ECO:0000256" key="3">
    <source>
        <dbReference type="SAM" id="MobiDB-lite"/>
    </source>
</evidence>
<evidence type="ECO:0000305" key="4"/>
<protein>
    <recommendedName>
        <fullName>LWamide neuropeptides</fullName>
    </recommendedName>
    <component>
        <recommendedName>
            <fullName>LWamide I</fullName>
        </recommendedName>
    </component>
    <component>
        <recommendedName>
            <fullName>LWamide II</fullName>
        </recommendedName>
    </component>
    <component>
        <recommendedName>
            <fullName>LWamide III</fullName>
        </recommendedName>
    </component>
    <component>
        <recommendedName>
            <fullName>LWamide IV</fullName>
        </recommendedName>
    </component>
    <component>
        <recommendedName>
            <fullName>LWamide V</fullName>
        </recommendedName>
    </component>
    <component>
        <recommendedName>
            <fullName>LWamide VI</fullName>
        </recommendedName>
    </component>
    <component>
        <recommendedName>
            <fullName>Metamorphosin A</fullName>
            <shortName>MMA</shortName>
        </recommendedName>
    </component>
    <component>
        <recommendedName>
            <fullName>MWamide</fullName>
        </recommendedName>
    </component>
</protein>
<feature type="propeptide" id="PRO_0000010009" evidence="2">
    <location>
        <begin position="1"/>
        <end position="6"/>
    </location>
</feature>
<feature type="peptide" id="PRO_0000010010" description="LWamide I" evidence="2">
    <location>
        <begin position="7"/>
        <end position="11"/>
    </location>
</feature>
<feature type="peptide" id="PRO_0000010011" description="LWamide II" evidence="2">
    <location>
        <begin position="15"/>
        <end position="20"/>
    </location>
</feature>
<feature type="propeptide" id="PRO_0000010012" evidence="2">
    <location>
        <begin position="23"/>
        <end position="27"/>
    </location>
</feature>
<feature type="peptide" id="PRO_0000010013" description="LWamide I" evidence="2">
    <location>
        <begin position="28"/>
        <end position="32"/>
    </location>
</feature>
<feature type="peptide" id="PRO_0000010014" description="LWamide II" evidence="2">
    <location>
        <begin position="36"/>
        <end position="41"/>
    </location>
</feature>
<feature type="propeptide" id="PRO_0000010015" evidence="2">
    <location>
        <begin position="44"/>
        <end position="49"/>
    </location>
</feature>
<feature type="peptide" id="PRO_0000010016" description="LWamide III" evidence="2">
    <location>
        <begin position="50"/>
        <end position="53"/>
    </location>
</feature>
<feature type="peptide" id="PRO_0000010017" description="LWamide II" evidence="2">
    <location>
        <begin position="57"/>
        <end position="62"/>
    </location>
</feature>
<feature type="propeptide" id="PRO_0000010018" evidence="2">
    <location>
        <begin position="65"/>
        <end position="70"/>
    </location>
</feature>
<feature type="peptide" id="PRO_0000010019" description="LWamide III" evidence="2">
    <location>
        <begin position="71"/>
        <end position="74"/>
    </location>
</feature>
<feature type="peptide" id="PRO_0000010020" description="LWamide II" evidence="2">
    <location>
        <begin position="78"/>
        <end position="83"/>
    </location>
</feature>
<feature type="propeptide" id="PRO_0000010021" evidence="2">
    <location>
        <begin position="86"/>
        <end position="90"/>
    </location>
</feature>
<feature type="peptide" id="PRO_0000010022" description="Metamorphosin A">
    <location>
        <begin position="91"/>
        <end position="95"/>
    </location>
</feature>
<feature type="peptide" id="PRO_0000010023" description="MWamide" evidence="2">
    <location>
        <begin position="99"/>
        <end position="106"/>
    </location>
</feature>
<feature type="peptide" id="PRO_0000010024" description="LWamide IV" evidence="2">
    <location>
        <begin position="110"/>
        <end position="115"/>
    </location>
</feature>
<feature type="propeptide" id="PRO_0000010025" evidence="2">
    <location>
        <begin position="118"/>
        <end position="123"/>
    </location>
</feature>
<feature type="peptide" id="PRO_0000010026" description="LWamide V" evidence="2">
    <location>
        <begin position="124"/>
        <end position="127"/>
    </location>
</feature>
<feature type="peptide" id="PRO_0000010027" description="LWamide VI" evidence="2">
    <location>
        <begin position="131"/>
        <end position="137"/>
    </location>
</feature>
<feature type="propeptide" id="PRO_0000010028" evidence="2">
    <location>
        <begin position="140"/>
        <end position="164"/>
    </location>
</feature>
<feature type="region of interest" description="Disordered" evidence="3">
    <location>
        <begin position="1"/>
        <end position="92"/>
    </location>
</feature>
<feature type="modified residue" description="Tryptophan amide" evidence="2">
    <location>
        <position position="11"/>
    </location>
</feature>
<feature type="modified residue" description="Tryptophan amide" evidence="2">
    <location>
        <position position="20"/>
    </location>
</feature>
<feature type="modified residue" description="Tryptophan amide" evidence="2">
    <location>
        <position position="32"/>
    </location>
</feature>
<feature type="modified residue" description="Tryptophan amide" evidence="2">
    <location>
        <position position="41"/>
    </location>
</feature>
<feature type="modified residue" description="Tryptophan amide" evidence="2">
    <location>
        <position position="53"/>
    </location>
</feature>
<feature type="modified residue" description="Tryptophan amide" evidence="2">
    <location>
        <position position="62"/>
    </location>
</feature>
<feature type="modified residue" description="Tryptophan amide" evidence="2">
    <location>
        <position position="74"/>
    </location>
</feature>
<feature type="modified residue" description="Tryptophan amide" evidence="2">
    <location>
        <position position="83"/>
    </location>
</feature>
<feature type="modified residue" description="Tryptophan amide" evidence="2">
    <location>
        <position position="95"/>
    </location>
</feature>
<feature type="modified residue" description="Tryptophan amide" evidence="2">
    <location>
        <position position="106"/>
    </location>
</feature>
<feature type="modified residue" description="Tryptophan amide" evidence="2">
    <location>
        <position position="115"/>
    </location>
</feature>
<feature type="modified residue" description="Tryptophan amide" evidence="2">
    <location>
        <position position="127"/>
    </location>
</feature>
<feature type="modified residue" description="Tryptophan amide" evidence="2">
    <location>
        <position position="137"/>
    </location>
</feature>
<feature type="sequence variant">
    <original>S</original>
    <variation>N</variation>
    <location>
        <position position="162"/>
    </location>
</feature>
<feature type="non-terminal residue">
    <location>
        <position position="1"/>
    </location>
</feature>
<proteinExistence type="evidence at transcript level"/>
<keyword id="KW-0027">Amidation</keyword>
<keyword id="KW-0165">Cleavage on pair of basic residues</keyword>
<keyword id="KW-0527">Neuropeptide</keyword>
<keyword id="KW-0677">Repeat</keyword>
<keyword id="KW-0964">Secreted</keyword>
<dbReference type="EMBL" id="X89735">
    <property type="protein sequence ID" value="CAA61887.1"/>
    <property type="molecule type" value="mRNA"/>
</dbReference>
<dbReference type="GO" id="GO:0005576">
    <property type="term" value="C:extracellular region"/>
    <property type="evidence" value="ECO:0007669"/>
    <property type="project" value="UniProtKB-SubCell"/>
</dbReference>
<dbReference type="GO" id="GO:0007218">
    <property type="term" value="P:neuropeptide signaling pathway"/>
    <property type="evidence" value="ECO:0007669"/>
    <property type="project" value="UniProtKB-KW"/>
</dbReference>
<organism>
    <name type="scientific">Actinia equina</name>
    <name type="common">Beadlet anemone</name>
    <dbReference type="NCBI Taxonomy" id="6106"/>
    <lineage>
        <taxon>Eukaryota</taxon>
        <taxon>Metazoa</taxon>
        <taxon>Cnidaria</taxon>
        <taxon>Anthozoa</taxon>
        <taxon>Hexacorallia</taxon>
        <taxon>Actiniaria</taxon>
        <taxon>Actiniidae</taxon>
        <taxon>Actinia</taxon>
    </lineage>
</organism>
<sequence>RSADAQQHGLWGKRQNPGLWGRSADAQQHGLWGKRQNPGLWGRSAEPGQPGLWGKRQNPGLWGRSAEPLQPGLWGKRQNPGLWGRSADAQQPGLWGKRQDLDIGMWGKRQKAGLWGRSADPGQLGLWGKRRSRIGLWGRSYEPPQFEDLEDLKKKSAIPKPSEQ</sequence>
<accession>Q16998</accession>
<reference evidence="4" key="1">
    <citation type="journal article" date="1996" name="Roux's Arch. Dev. Biol.">
        <title>LWamides from Cnidaria constitute a novel family of neuropeptides with morphogenetic activity.</title>
        <authorList>
            <person name="Gajewski M."/>
            <person name="Leitz T."/>
            <person name="Schlossherr J."/>
            <person name="Plickert G."/>
        </authorList>
    </citation>
    <scope>NUCLEOTIDE SEQUENCE [MRNA]</scope>
</reference>